<gene>
    <name evidence="1" type="primary">aroC</name>
    <name type="ordered locus">MGAS10750_Spy0712</name>
</gene>
<evidence type="ECO:0000255" key="1">
    <source>
        <dbReference type="HAMAP-Rule" id="MF_00300"/>
    </source>
</evidence>
<comment type="function">
    <text evidence="1">Catalyzes the anti-1,4-elimination of the C-3 phosphate and the C-6 proR hydrogen from 5-enolpyruvylshikimate-3-phosphate (EPSP) to yield chorismate, which is the branch point compound that serves as the starting substrate for the three terminal pathways of aromatic amino acid biosynthesis. This reaction introduces a second double bond into the aromatic ring system.</text>
</comment>
<comment type="catalytic activity">
    <reaction evidence="1">
        <text>5-O-(1-carboxyvinyl)-3-phosphoshikimate = chorismate + phosphate</text>
        <dbReference type="Rhea" id="RHEA:21020"/>
        <dbReference type="ChEBI" id="CHEBI:29748"/>
        <dbReference type="ChEBI" id="CHEBI:43474"/>
        <dbReference type="ChEBI" id="CHEBI:57701"/>
        <dbReference type="EC" id="4.2.3.5"/>
    </reaction>
</comment>
<comment type="cofactor">
    <cofactor evidence="1">
        <name>FMNH2</name>
        <dbReference type="ChEBI" id="CHEBI:57618"/>
    </cofactor>
    <text evidence="1">Reduced FMN (FMNH(2)).</text>
</comment>
<comment type="pathway">
    <text evidence="1">Metabolic intermediate biosynthesis; chorismate biosynthesis; chorismate from D-erythrose 4-phosphate and phosphoenolpyruvate: step 7/7.</text>
</comment>
<comment type="subunit">
    <text evidence="1">Homotetramer.</text>
</comment>
<comment type="similarity">
    <text evidence="1">Belongs to the chorismate synthase family.</text>
</comment>
<organism>
    <name type="scientific">Streptococcus pyogenes serotype M4 (strain MGAS10750)</name>
    <dbReference type="NCBI Taxonomy" id="370554"/>
    <lineage>
        <taxon>Bacteria</taxon>
        <taxon>Bacillati</taxon>
        <taxon>Bacillota</taxon>
        <taxon>Bacilli</taxon>
        <taxon>Lactobacillales</taxon>
        <taxon>Streptococcaceae</taxon>
        <taxon>Streptococcus</taxon>
    </lineage>
</organism>
<sequence>MRYLTAGESHGPSLTAIIEGIPAGLTLHPADIDHELQRRQGGYGRGARMSIETDRVQISSGVRHGKTTGAPITLTVINKDHQKWLDVMAVGDIEETLKLKRRVKHPRPGHADLVGGIKYHFNDLRDALERSSARETTMRVAVGAVAKRILAELGIDMLHHILIFGGITITIPSKLSFRELQERALHSELSIVNPKQEEEIKTYIDKIKKEGDTIGGIIETIVQGVPAGLGSYVQWDKKLDAKLAQAVLSINAFKGVEFGVGFDMGFQKGSQVMDEITWTPTQGYGRQTNHLGGFEGGMTTGQPLVVKGVMKPIPTLYKPLMSVDIDSHEPYKATVERSDPTALPAAGVIMENVVATVLAKEILETFSSTTMSELQKAFSDYRAYVKQF</sequence>
<proteinExistence type="inferred from homology"/>
<accession>Q1J7B2</accession>
<name>AROC_STRPF</name>
<reference key="1">
    <citation type="journal article" date="2006" name="Proc. Natl. Acad. Sci. U.S.A.">
        <title>Molecular genetic anatomy of inter- and intraserotype variation in the human bacterial pathogen group A Streptococcus.</title>
        <authorList>
            <person name="Beres S.B."/>
            <person name="Richter E.W."/>
            <person name="Nagiec M.J."/>
            <person name="Sumby P."/>
            <person name="Porcella S.F."/>
            <person name="DeLeo F.R."/>
            <person name="Musser J.M."/>
        </authorList>
    </citation>
    <scope>NUCLEOTIDE SEQUENCE [LARGE SCALE GENOMIC DNA]</scope>
    <source>
        <strain>MGAS10750</strain>
    </source>
</reference>
<protein>
    <recommendedName>
        <fullName evidence="1">Chorismate synthase</fullName>
        <shortName evidence="1">CS</shortName>
        <ecNumber evidence="1">4.2.3.5</ecNumber>
    </recommendedName>
    <alternativeName>
        <fullName evidence="1">5-enolpyruvylshikimate-3-phosphate phospholyase</fullName>
    </alternativeName>
</protein>
<dbReference type="EC" id="4.2.3.5" evidence="1"/>
<dbReference type="EMBL" id="CP000262">
    <property type="protein sequence ID" value="ABF37662.1"/>
    <property type="molecule type" value="Genomic_DNA"/>
</dbReference>
<dbReference type="SMR" id="Q1J7B2"/>
<dbReference type="KEGG" id="spi:MGAS10750_Spy0712"/>
<dbReference type="HOGENOM" id="CLU_034547_2_0_9"/>
<dbReference type="UniPathway" id="UPA00053">
    <property type="reaction ID" value="UER00090"/>
</dbReference>
<dbReference type="Proteomes" id="UP000002434">
    <property type="component" value="Chromosome"/>
</dbReference>
<dbReference type="GO" id="GO:0005829">
    <property type="term" value="C:cytosol"/>
    <property type="evidence" value="ECO:0007669"/>
    <property type="project" value="TreeGrafter"/>
</dbReference>
<dbReference type="GO" id="GO:0004107">
    <property type="term" value="F:chorismate synthase activity"/>
    <property type="evidence" value="ECO:0007669"/>
    <property type="project" value="UniProtKB-UniRule"/>
</dbReference>
<dbReference type="GO" id="GO:0010181">
    <property type="term" value="F:FMN binding"/>
    <property type="evidence" value="ECO:0007669"/>
    <property type="project" value="TreeGrafter"/>
</dbReference>
<dbReference type="GO" id="GO:0008652">
    <property type="term" value="P:amino acid biosynthetic process"/>
    <property type="evidence" value="ECO:0007669"/>
    <property type="project" value="UniProtKB-KW"/>
</dbReference>
<dbReference type="GO" id="GO:0009073">
    <property type="term" value="P:aromatic amino acid family biosynthetic process"/>
    <property type="evidence" value="ECO:0007669"/>
    <property type="project" value="UniProtKB-KW"/>
</dbReference>
<dbReference type="GO" id="GO:0009423">
    <property type="term" value="P:chorismate biosynthetic process"/>
    <property type="evidence" value="ECO:0007669"/>
    <property type="project" value="UniProtKB-UniRule"/>
</dbReference>
<dbReference type="CDD" id="cd07304">
    <property type="entry name" value="Chorismate_synthase"/>
    <property type="match status" value="1"/>
</dbReference>
<dbReference type="FunFam" id="3.60.150.10:FF:000002">
    <property type="entry name" value="Chorismate synthase"/>
    <property type="match status" value="1"/>
</dbReference>
<dbReference type="Gene3D" id="3.60.150.10">
    <property type="entry name" value="Chorismate synthase AroC"/>
    <property type="match status" value="1"/>
</dbReference>
<dbReference type="HAMAP" id="MF_00300">
    <property type="entry name" value="Chorismate_synth"/>
    <property type="match status" value="1"/>
</dbReference>
<dbReference type="InterPro" id="IPR000453">
    <property type="entry name" value="Chorismate_synth"/>
</dbReference>
<dbReference type="InterPro" id="IPR035904">
    <property type="entry name" value="Chorismate_synth_AroC_sf"/>
</dbReference>
<dbReference type="InterPro" id="IPR020541">
    <property type="entry name" value="Chorismate_synthase_CS"/>
</dbReference>
<dbReference type="NCBIfam" id="TIGR00033">
    <property type="entry name" value="aroC"/>
    <property type="match status" value="1"/>
</dbReference>
<dbReference type="NCBIfam" id="NF003793">
    <property type="entry name" value="PRK05382.1"/>
    <property type="match status" value="1"/>
</dbReference>
<dbReference type="PANTHER" id="PTHR21085">
    <property type="entry name" value="CHORISMATE SYNTHASE"/>
    <property type="match status" value="1"/>
</dbReference>
<dbReference type="PANTHER" id="PTHR21085:SF0">
    <property type="entry name" value="CHORISMATE SYNTHASE"/>
    <property type="match status" value="1"/>
</dbReference>
<dbReference type="Pfam" id="PF01264">
    <property type="entry name" value="Chorismate_synt"/>
    <property type="match status" value="1"/>
</dbReference>
<dbReference type="PIRSF" id="PIRSF001456">
    <property type="entry name" value="Chorismate_synth"/>
    <property type="match status" value="1"/>
</dbReference>
<dbReference type="SUPFAM" id="SSF103263">
    <property type="entry name" value="Chorismate synthase, AroC"/>
    <property type="match status" value="1"/>
</dbReference>
<dbReference type="PROSITE" id="PS00787">
    <property type="entry name" value="CHORISMATE_SYNTHASE_1"/>
    <property type="match status" value="1"/>
</dbReference>
<dbReference type="PROSITE" id="PS00788">
    <property type="entry name" value="CHORISMATE_SYNTHASE_2"/>
    <property type="match status" value="1"/>
</dbReference>
<dbReference type="PROSITE" id="PS00789">
    <property type="entry name" value="CHORISMATE_SYNTHASE_3"/>
    <property type="match status" value="1"/>
</dbReference>
<feature type="chain" id="PRO_0000256348" description="Chorismate synthase">
    <location>
        <begin position="1"/>
        <end position="388"/>
    </location>
</feature>
<feature type="binding site" evidence="1">
    <location>
        <position position="39"/>
    </location>
    <ligand>
        <name>NADP(+)</name>
        <dbReference type="ChEBI" id="CHEBI:58349"/>
    </ligand>
</feature>
<feature type="binding site" evidence="1">
    <location>
        <position position="45"/>
    </location>
    <ligand>
        <name>NADP(+)</name>
        <dbReference type="ChEBI" id="CHEBI:58349"/>
    </ligand>
</feature>
<feature type="binding site" evidence="1">
    <location>
        <begin position="130"/>
        <end position="132"/>
    </location>
    <ligand>
        <name>FMN</name>
        <dbReference type="ChEBI" id="CHEBI:58210"/>
    </ligand>
</feature>
<feature type="binding site" evidence="1">
    <location>
        <begin position="251"/>
        <end position="252"/>
    </location>
    <ligand>
        <name>FMN</name>
        <dbReference type="ChEBI" id="CHEBI:58210"/>
    </ligand>
</feature>
<feature type="binding site" evidence="1">
    <location>
        <position position="296"/>
    </location>
    <ligand>
        <name>FMN</name>
        <dbReference type="ChEBI" id="CHEBI:58210"/>
    </ligand>
</feature>
<feature type="binding site" evidence="1">
    <location>
        <begin position="311"/>
        <end position="315"/>
    </location>
    <ligand>
        <name>FMN</name>
        <dbReference type="ChEBI" id="CHEBI:58210"/>
    </ligand>
</feature>
<feature type="binding site" evidence="1">
    <location>
        <position position="337"/>
    </location>
    <ligand>
        <name>FMN</name>
        <dbReference type="ChEBI" id="CHEBI:58210"/>
    </ligand>
</feature>
<keyword id="KW-0028">Amino-acid biosynthesis</keyword>
<keyword id="KW-0057">Aromatic amino acid biosynthesis</keyword>
<keyword id="KW-0274">FAD</keyword>
<keyword id="KW-0285">Flavoprotein</keyword>
<keyword id="KW-0288">FMN</keyword>
<keyword id="KW-0456">Lyase</keyword>
<keyword id="KW-0521">NADP</keyword>